<gene>
    <name type="primary">ZSCAN25</name>
    <name type="synonym">ZNF498</name>
</gene>
<proteinExistence type="evidence at protein level"/>
<dbReference type="EMBL" id="AK160369">
    <property type="protein sequence ID" value="BAD18712.1"/>
    <property type="status" value="ALT_INIT"/>
    <property type="molecule type" value="mRNA"/>
</dbReference>
<dbReference type="EMBL" id="BX640720">
    <property type="protein sequence ID" value="CAE45839.1"/>
    <property type="molecule type" value="mRNA"/>
</dbReference>
<dbReference type="EMBL" id="CH236956">
    <property type="protein sequence ID" value="EAL23869.1"/>
    <property type="status" value="ALT_SEQ"/>
    <property type="molecule type" value="Genomic_DNA"/>
</dbReference>
<dbReference type="EMBL" id="CH471091">
    <property type="protein sequence ID" value="EAW76643.1"/>
    <property type="molecule type" value="Genomic_DNA"/>
</dbReference>
<dbReference type="EMBL" id="CH471091">
    <property type="protein sequence ID" value="EAW76646.1"/>
    <property type="molecule type" value="Genomic_DNA"/>
</dbReference>
<dbReference type="EMBL" id="CH471091">
    <property type="protein sequence ID" value="EAW76647.1"/>
    <property type="molecule type" value="Genomic_DNA"/>
</dbReference>
<dbReference type="EMBL" id="BC069644">
    <property type="protein sequence ID" value="AAH69644.2"/>
    <property type="molecule type" value="mRNA"/>
</dbReference>
<dbReference type="EMBL" id="BC074902">
    <property type="protein sequence ID" value="AAH74902.3"/>
    <property type="molecule type" value="mRNA"/>
</dbReference>
<dbReference type="EMBL" id="BC074903">
    <property type="protein sequence ID" value="AAH74903.3"/>
    <property type="molecule type" value="mRNA"/>
</dbReference>
<dbReference type="EMBL" id="BC089402">
    <property type="protein sequence ID" value="AAH89402.1"/>
    <property type="molecule type" value="mRNA"/>
</dbReference>
<dbReference type="EMBL" id="BC114573">
    <property type="protein sequence ID" value="AAI14574.1"/>
    <property type="status" value="ALT_INIT"/>
    <property type="molecule type" value="mRNA"/>
</dbReference>
<dbReference type="EMBL" id="BC114941">
    <property type="protein sequence ID" value="AAI14942.1"/>
    <property type="status" value="ALT_SEQ"/>
    <property type="molecule type" value="mRNA"/>
</dbReference>
<dbReference type="CCDS" id="CCDS5671.2">
    <molecule id="Q6NSZ9-1"/>
</dbReference>
<dbReference type="RefSeq" id="NP_001337908.1">
    <molecule id="Q6NSZ9-1"/>
    <property type="nucleotide sequence ID" value="NM_001350979.2"/>
</dbReference>
<dbReference type="RefSeq" id="NP_001337909.1">
    <molecule id="Q6NSZ9-1"/>
    <property type="nucleotide sequence ID" value="NM_001350980.2"/>
</dbReference>
<dbReference type="RefSeq" id="NP_660090.2">
    <molecule id="Q6NSZ9-1"/>
    <property type="nucleotide sequence ID" value="NM_145115.3"/>
</dbReference>
<dbReference type="RefSeq" id="XP_005250251.1">
    <property type="nucleotide sequence ID" value="XM_005250194.2"/>
</dbReference>
<dbReference type="RefSeq" id="XP_011514207.1">
    <molecule id="Q6NSZ9-1"/>
    <property type="nucleotide sequence ID" value="XM_011515905.3"/>
</dbReference>
<dbReference type="RefSeq" id="XP_011514208.1">
    <property type="nucleotide sequence ID" value="XM_011515906.2"/>
</dbReference>
<dbReference type="RefSeq" id="XP_011514209.1">
    <molecule id="Q6NSZ9-1"/>
    <property type="nucleotide sequence ID" value="XM_011515907.3"/>
</dbReference>
<dbReference type="RefSeq" id="XP_011514210.1">
    <property type="nucleotide sequence ID" value="XM_011515908.2"/>
</dbReference>
<dbReference type="RefSeq" id="XP_016867313.1">
    <property type="nucleotide sequence ID" value="XM_017011824.1"/>
</dbReference>
<dbReference type="RefSeq" id="XP_016867314.1">
    <property type="nucleotide sequence ID" value="XM_017011825.1"/>
</dbReference>
<dbReference type="RefSeq" id="XP_016867315.1">
    <property type="nucleotide sequence ID" value="XM_017011826.1"/>
</dbReference>
<dbReference type="RefSeq" id="XP_047275967.1">
    <molecule id="Q6NSZ9-1"/>
    <property type="nucleotide sequence ID" value="XM_047420011.1"/>
</dbReference>
<dbReference type="RefSeq" id="XP_047275968.1">
    <molecule id="Q6NSZ9-1"/>
    <property type="nucleotide sequence ID" value="XM_047420012.1"/>
</dbReference>
<dbReference type="RefSeq" id="XP_047275969.1">
    <molecule id="Q6NSZ9-1"/>
    <property type="nucleotide sequence ID" value="XM_047420013.1"/>
</dbReference>
<dbReference type="RefSeq" id="XP_047275970.1">
    <molecule id="Q6NSZ9-1"/>
    <property type="nucleotide sequence ID" value="XM_047420014.1"/>
</dbReference>
<dbReference type="RefSeq" id="XP_047275971.1">
    <molecule id="Q6NSZ9-1"/>
    <property type="nucleotide sequence ID" value="XM_047420015.1"/>
</dbReference>
<dbReference type="RefSeq" id="XP_054213492.1">
    <molecule id="Q6NSZ9-1"/>
    <property type="nucleotide sequence ID" value="XM_054357517.1"/>
</dbReference>
<dbReference type="RefSeq" id="XP_054213493.1">
    <molecule id="Q6NSZ9-1"/>
    <property type="nucleotide sequence ID" value="XM_054357518.1"/>
</dbReference>
<dbReference type="RefSeq" id="XP_054213494.1">
    <molecule id="Q6NSZ9-1"/>
    <property type="nucleotide sequence ID" value="XM_054357519.1"/>
</dbReference>
<dbReference type="RefSeq" id="XP_054213495.1">
    <molecule id="Q6NSZ9-1"/>
    <property type="nucleotide sequence ID" value="XM_054357520.1"/>
</dbReference>
<dbReference type="RefSeq" id="XP_054213496.1">
    <molecule id="Q6NSZ9-1"/>
    <property type="nucleotide sequence ID" value="XM_054357521.1"/>
</dbReference>
<dbReference type="RefSeq" id="XP_054213497.1">
    <molecule id="Q6NSZ9-1"/>
    <property type="nucleotide sequence ID" value="XM_054357522.1"/>
</dbReference>
<dbReference type="RefSeq" id="XP_054213498.1">
    <molecule id="Q6NSZ9-1"/>
    <property type="nucleotide sequence ID" value="XM_054357523.1"/>
</dbReference>
<dbReference type="SMR" id="Q6NSZ9"/>
<dbReference type="BioGRID" id="128753">
    <property type="interactions" value="76"/>
</dbReference>
<dbReference type="FunCoup" id="Q6NSZ9">
    <property type="interactions" value="1104"/>
</dbReference>
<dbReference type="IntAct" id="Q6NSZ9">
    <property type="interactions" value="68"/>
</dbReference>
<dbReference type="STRING" id="9606.ENSP00000377708"/>
<dbReference type="GlyGen" id="Q6NSZ9">
    <property type="glycosylation" value="2 sites, 1 O-linked glycan (1 site)"/>
</dbReference>
<dbReference type="iPTMnet" id="Q6NSZ9"/>
<dbReference type="PhosphoSitePlus" id="Q6NSZ9"/>
<dbReference type="BioMuta" id="ZSCAN25"/>
<dbReference type="DMDM" id="160359044"/>
<dbReference type="jPOST" id="Q6NSZ9"/>
<dbReference type="MassIVE" id="Q6NSZ9"/>
<dbReference type="PaxDb" id="9606-ENSP00000377708"/>
<dbReference type="PeptideAtlas" id="Q6NSZ9"/>
<dbReference type="ProteomicsDB" id="66645">
    <molecule id="Q6NSZ9-1"/>
</dbReference>
<dbReference type="ProteomicsDB" id="66646">
    <molecule id="Q6NSZ9-2"/>
</dbReference>
<dbReference type="ProteomicsDB" id="66647">
    <molecule id="Q6NSZ9-3"/>
</dbReference>
<dbReference type="ProteomicsDB" id="66648">
    <molecule id="Q6NSZ9-4"/>
</dbReference>
<dbReference type="Pumba" id="Q6NSZ9"/>
<dbReference type="ABCD" id="Q6NSZ9">
    <property type="antibodies" value="2 sequenced antibodies"/>
</dbReference>
<dbReference type="Antibodypedia" id="30418">
    <property type="antibodies" value="194 antibodies from 25 providers"/>
</dbReference>
<dbReference type="DNASU" id="221785"/>
<dbReference type="Ensembl" id="ENST00000334715.7">
    <molecule id="Q6NSZ9-1"/>
    <property type="protein sequence ID" value="ENSP00000334800.3"/>
    <property type="gene ID" value="ENSG00000197037.11"/>
</dbReference>
<dbReference type="Ensembl" id="ENST00000394150.5">
    <molecule id="Q6NSZ9-4"/>
    <property type="protein sequence ID" value="ENSP00000377706.1"/>
    <property type="gene ID" value="ENSG00000197037.11"/>
</dbReference>
<dbReference type="Ensembl" id="ENST00000394152.7">
    <molecule id="Q6NSZ9-1"/>
    <property type="protein sequence ID" value="ENSP00000377708.2"/>
    <property type="gene ID" value="ENSG00000197037.11"/>
</dbReference>
<dbReference type="GeneID" id="221785"/>
<dbReference type="KEGG" id="hsa:221785"/>
<dbReference type="MANE-Select" id="ENST00000394152.7">
    <property type="protein sequence ID" value="ENSP00000377708.2"/>
    <property type="RefSeq nucleotide sequence ID" value="NM_145115.3"/>
    <property type="RefSeq protein sequence ID" value="NP_660090.2"/>
</dbReference>
<dbReference type="UCSC" id="uc003url.1">
    <molecule id="Q6NSZ9-1"/>
    <property type="organism name" value="human"/>
</dbReference>
<dbReference type="AGR" id="HGNC:21961"/>
<dbReference type="CTD" id="221785"/>
<dbReference type="DisGeNET" id="221785"/>
<dbReference type="GeneCards" id="ZSCAN25"/>
<dbReference type="HGNC" id="HGNC:21961">
    <property type="gene designation" value="ZSCAN25"/>
</dbReference>
<dbReference type="HPA" id="ENSG00000197037">
    <property type="expression patterns" value="Low tissue specificity"/>
</dbReference>
<dbReference type="neXtProt" id="NX_Q6NSZ9"/>
<dbReference type="OpenTargets" id="ENSG00000197037"/>
<dbReference type="PharmGKB" id="PA134962723"/>
<dbReference type="VEuPathDB" id="HostDB:ENSG00000197037"/>
<dbReference type="eggNOG" id="KOG1721">
    <property type="taxonomic scope" value="Eukaryota"/>
</dbReference>
<dbReference type="GeneTree" id="ENSGT00940000162113"/>
<dbReference type="HOGENOM" id="CLU_002678_53_4_1"/>
<dbReference type="InParanoid" id="Q6NSZ9"/>
<dbReference type="OMA" id="VCGECWK"/>
<dbReference type="OrthoDB" id="6077919at2759"/>
<dbReference type="PAN-GO" id="Q6NSZ9">
    <property type="GO annotations" value="3 GO annotations based on evolutionary models"/>
</dbReference>
<dbReference type="PhylomeDB" id="Q6NSZ9"/>
<dbReference type="TreeFam" id="TF350842"/>
<dbReference type="PathwayCommons" id="Q6NSZ9"/>
<dbReference type="Reactome" id="R-HSA-212436">
    <property type="pathway name" value="Generic Transcription Pathway"/>
</dbReference>
<dbReference type="SignaLink" id="Q6NSZ9"/>
<dbReference type="BioGRID-ORCS" id="221785">
    <property type="hits" value="15 hits in 1171 CRISPR screens"/>
</dbReference>
<dbReference type="ChiTaRS" id="ZSCAN25">
    <property type="organism name" value="human"/>
</dbReference>
<dbReference type="GenomeRNAi" id="221785"/>
<dbReference type="Pharos" id="Q6NSZ9">
    <property type="development level" value="Tdark"/>
</dbReference>
<dbReference type="PRO" id="PR:Q6NSZ9"/>
<dbReference type="Proteomes" id="UP000005640">
    <property type="component" value="Chromosome 7"/>
</dbReference>
<dbReference type="RNAct" id="Q6NSZ9">
    <property type="molecule type" value="protein"/>
</dbReference>
<dbReference type="Bgee" id="ENSG00000197037">
    <property type="expression patterns" value="Expressed in tibialis anterior and 159 other cell types or tissues"/>
</dbReference>
<dbReference type="ExpressionAtlas" id="Q6NSZ9">
    <property type="expression patterns" value="baseline and differential"/>
</dbReference>
<dbReference type="GO" id="GO:0005634">
    <property type="term" value="C:nucleus"/>
    <property type="evidence" value="ECO:0007669"/>
    <property type="project" value="UniProtKB-SubCell"/>
</dbReference>
<dbReference type="GO" id="GO:0000981">
    <property type="term" value="F:DNA-binding transcription factor activity, RNA polymerase II-specific"/>
    <property type="evidence" value="ECO:0000318"/>
    <property type="project" value="GO_Central"/>
</dbReference>
<dbReference type="GO" id="GO:0000978">
    <property type="term" value="F:RNA polymerase II cis-regulatory region sequence-specific DNA binding"/>
    <property type="evidence" value="ECO:0000318"/>
    <property type="project" value="GO_Central"/>
</dbReference>
<dbReference type="GO" id="GO:0008270">
    <property type="term" value="F:zinc ion binding"/>
    <property type="evidence" value="ECO:0007669"/>
    <property type="project" value="UniProtKB-KW"/>
</dbReference>
<dbReference type="GO" id="GO:0006357">
    <property type="term" value="P:regulation of transcription by RNA polymerase II"/>
    <property type="evidence" value="ECO:0000318"/>
    <property type="project" value="GO_Central"/>
</dbReference>
<dbReference type="CDD" id="cd07765">
    <property type="entry name" value="KRAB_A-box"/>
    <property type="match status" value="1"/>
</dbReference>
<dbReference type="CDD" id="cd07936">
    <property type="entry name" value="SCAN"/>
    <property type="match status" value="1"/>
</dbReference>
<dbReference type="FunFam" id="3.30.160.60:FF:000088">
    <property type="entry name" value="Zinc finger and SCAN domain containing 2"/>
    <property type="match status" value="1"/>
</dbReference>
<dbReference type="FunFam" id="3.30.160.60:FF:000464">
    <property type="entry name" value="Zinc finger and SCAN domain containing 25"/>
    <property type="match status" value="1"/>
</dbReference>
<dbReference type="FunFam" id="3.30.160.60:FF:000850">
    <property type="entry name" value="Zinc finger and SCAN domain containing 25"/>
    <property type="match status" value="1"/>
</dbReference>
<dbReference type="FunFam" id="1.10.4020.10:FF:000001">
    <property type="entry name" value="zinc finger protein 263 isoform X1"/>
    <property type="match status" value="1"/>
</dbReference>
<dbReference type="FunFam" id="3.30.160.60:FF:002343">
    <property type="entry name" value="Zinc finger protein 33A"/>
    <property type="match status" value="1"/>
</dbReference>
<dbReference type="FunFam" id="3.30.160.60:FF:001437">
    <property type="entry name" value="Zinc finger protein 594"/>
    <property type="match status" value="1"/>
</dbReference>
<dbReference type="FunFam" id="3.30.160.60:FF:000912">
    <property type="entry name" value="Zinc finger protein 660"/>
    <property type="match status" value="1"/>
</dbReference>
<dbReference type="FunFam" id="3.30.160.60:FF:002333">
    <property type="entry name" value="Zinc finger protein 668"/>
    <property type="match status" value="1"/>
</dbReference>
<dbReference type="Gene3D" id="3.30.160.60">
    <property type="entry name" value="Classic Zinc Finger"/>
    <property type="match status" value="7"/>
</dbReference>
<dbReference type="Gene3D" id="1.10.4020.10">
    <property type="entry name" value="DNA breaking-rejoining enzymes"/>
    <property type="match status" value="1"/>
</dbReference>
<dbReference type="InterPro" id="IPR001909">
    <property type="entry name" value="KRAB"/>
</dbReference>
<dbReference type="InterPro" id="IPR036051">
    <property type="entry name" value="KRAB_dom_sf"/>
</dbReference>
<dbReference type="InterPro" id="IPR003309">
    <property type="entry name" value="SCAN_dom"/>
</dbReference>
<dbReference type="InterPro" id="IPR038269">
    <property type="entry name" value="SCAN_sf"/>
</dbReference>
<dbReference type="InterPro" id="IPR036236">
    <property type="entry name" value="Znf_C2H2_sf"/>
</dbReference>
<dbReference type="InterPro" id="IPR013087">
    <property type="entry name" value="Znf_C2H2_type"/>
</dbReference>
<dbReference type="PANTHER" id="PTHR23226:SF379">
    <property type="entry name" value="C2H2-TYPE DOMAIN-CONTAINING PROTEIN"/>
    <property type="match status" value="1"/>
</dbReference>
<dbReference type="PANTHER" id="PTHR23226">
    <property type="entry name" value="ZINC FINGER AND SCAN DOMAIN-CONTAINING"/>
    <property type="match status" value="1"/>
</dbReference>
<dbReference type="Pfam" id="PF02023">
    <property type="entry name" value="SCAN"/>
    <property type="match status" value="1"/>
</dbReference>
<dbReference type="Pfam" id="PF00096">
    <property type="entry name" value="zf-C2H2"/>
    <property type="match status" value="7"/>
</dbReference>
<dbReference type="SMART" id="SM00431">
    <property type="entry name" value="SCAN"/>
    <property type="match status" value="1"/>
</dbReference>
<dbReference type="SMART" id="SM00355">
    <property type="entry name" value="ZnF_C2H2"/>
    <property type="match status" value="7"/>
</dbReference>
<dbReference type="SUPFAM" id="SSF57667">
    <property type="entry name" value="beta-beta-alpha zinc fingers"/>
    <property type="match status" value="4"/>
</dbReference>
<dbReference type="SUPFAM" id="SSF109640">
    <property type="entry name" value="KRAB domain (Kruppel-associated box)"/>
    <property type="match status" value="1"/>
</dbReference>
<dbReference type="SUPFAM" id="SSF47353">
    <property type="entry name" value="Retrovirus capsid dimerization domain-like"/>
    <property type="match status" value="1"/>
</dbReference>
<dbReference type="PROSITE" id="PS50804">
    <property type="entry name" value="SCAN_BOX"/>
    <property type="match status" value="1"/>
</dbReference>
<dbReference type="PROSITE" id="PS00028">
    <property type="entry name" value="ZINC_FINGER_C2H2_1"/>
    <property type="match status" value="6"/>
</dbReference>
<dbReference type="PROSITE" id="PS50157">
    <property type="entry name" value="ZINC_FINGER_C2H2_2"/>
    <property type="match status" value="7"/>
</dbReference>
<keyword id="KW-0025">Alternative splicing</keyword>
<keyword id="KW-0238">DNA-binding</keyword>
<keyword id="KW-1017">Isopeptide bond</keyword>
<keyword id="KW-0479">Metal-binding</keyword>
<keyword id="KW-0539">Nucleus</keyword>
<keyword id="KW-1267">Proteomics identification</keyword>
<keyword id="KW-1185">Reference proteome</keyword>
<keyword id="KW-0677">Repeat</keyword>
<keyword id="KW-0804">Transcription</keyword>
<keyword id="KW-0805">Transcription regulation</keyword>
<keyword id="KW-0832">Ubl conjugation</keyword>
<keyword id="KW-0862">Zinc</keyword>
<keyword id="KW-0863">Zinc-finger</keyword>
<organism>
    <name type="scientific">Homo sapiens</name>
    <name type="common">Human</name>
    <dbReference type="NCBI Taxonomy" id="9606"/>
    <lineage>
        <taxon>Eukaryota</taxon>
        <taxon>Metazoa</taxon>
        <taxon>Chordata</taxon>
        <taxon>Craniata</taxon>
        <taxon>Vertebrata</taxon>
        <taxon>Euteleostomi</taxon>
        <taxon>Mammalia</taxon>
        <taxon>Eutheria</taxon>
        <taxon>Euarchontoglires</taxon>
        <taxon>Primates</taxon>
        <taxon>Haplorrhini</taxon>
        <taxon>Catarrhini</taxon>
        <taxon>Hominidae</taxon>
        <taxon>Homo</taxon>
    </lineage>
</organism>
<reference key="1">
    <citation type="submission" date="2004-04" db="EMBL/GenBank/DDBJ databases">
        <title>The nucleotide sequence of a long cDNA clone isolated from human spleen.</title>
        <authorList>
            <person name="Jikuya H."/>
            <person name="Takano J."/>
            <person name="Nomura N."/>
            <person name="Kikuno R."/>
            <person name="Nagase T."/>
            <person name="Ohara O."/>
        </authorList>
    </citation>
    <scope>NUCLEOTIDE SEQUENCE [LARGE SCALE MRNA] (ISOFORM 3)</scope>
    <source>
        <tissue>Spleen</tissue>
    </source>
</reference>
<reference key="2">
    <citation type="journal article" date="2007" name="BMC Genomics">
        <title>The full-ORF clone resource of the German cDNA consortium.</title>
        <authorList>
            <person name="Bechtel S."/>
            <person name="Rosenfelder H."/>
            <person name="Duda A."/>
            <person name="Schmidt C.P."/>
            <person name="Ernst U."/>
            <person name="Wellenreuther R."/>
            <person name="Mehrle A."/>
            <person name="Schuster C."/>
            <person name="Bahr A."/>
            <person name="Bloecker H."/>
            <person name="Heubner D."/>
            <person name="Hoerlein A."/>
            <person name="Michel G."/>
            <person name="Wedler H."/>
            <person name="Koehrer K."/>
            <person name="Ottenwaelder B."/>
            <person name="Poustka A."/>
            <person name="Wiemann S."/>
            <person name="Schupp I."/>
        </authorList>
    </citation>
    <scope>NUCLEOTIDE SEQUENCE [LARGE SCALE MRNA] (ISOFORM 4)</scope>
    <source>
        <tissue>Fetal brain</tissue>
    </source>
</reference>
<reference key="3">
    <citation type="journal article" date="2003" name="Science">
        <title>Human chromosome 7: DNA sequence and biology.</title>
        <authorList>
            <person name="Scherer S.W."/>
            <person name="Cheung J."/>
            <person name="MacDonald J.R."/>
            <person name="Osborne L.R."/>
            <person name="Nakabayashi K."/>
            <person name="Herbrick J.-A."/>
            <person name="Carson A.R."/>
            <person name="Parker-Katiraee L."/>
            <person name="Skaug J."/>
            <person name="Khaja R."/>
            <person name="Zhang J."/>
            <person name="Hudek A.K."/>
            <person name="Li M."/>
            <person name="Haddad M."/>
            <person name="Duggan G.E."/>
            <person name="Fernandez B.A."/>
            <person name="Kanematsu E."/>
            <person name="Gentles S."/>
            <person name="Christopoulos C.C."/>
            <person name="Choufani S."/>
            <person name="Kwasnicka D."/>
            <person name="Zheng X.H."/>
            <person name="Lai Z."/>
            <person name="Nusskern D.R."/>
            <person name="Zhang Q."/>
            <person name="Gu Z."/>
            <person name="Lu F."/>
            <person name="Zeesman S."/>
            <person name="Nowaczyk M.J."/>
            <person name="Teshima I."/>
            <person name="Chitayat D."/>
            <person name="Shuman C."/>
            <person name="Weksberg R."/>
            <person name="Zackai E.H."/>
            <person name="Grebe T.A."/>
            <person name="Cox S.R."/>
            <person name="Kirkpatrick S.J."/>
            <person name="Rahman N."/>
            <person name="Friedman J.M."/>
            <person name="Heng H.H.Q."/>
            <person name="Pelicci P.G."/>
            <person name="Lo-Coco F."/>
            <person name="Belloni E."/>
            <person name="Shaffer L.G."/>
            <person name="Pober B."/>
            <person name="Morton C.C."/>
            <person name="Gusella J.F."/>
            <person name="Bruns G.A.P."/>
            <person name="Korf B.R."/>
            <person name="Quade B.J."/>
            <person name="Ligon A.H."/>
            <person name="Ferguson H."/>
            <person name="Higgins A.W."/>
            <person name="Leach N.T."/>
            <person name="Herrick S.R."/>
            <person name="Lemyre E."/>
            <person name="Farra C.G."/>
            <person name="Kim H.-G."/>
            <person name="Summers A.M."/>
            <person name="Gripp K.W."/>
            <person name="Roberts W."/>
            <person name="Szatmari P."/>
            <person name="Winsor E.J.T."/>
            <person name="Grzeschik K.-H."/>
            <person name="Teebi A."/>
            <person name="Minassian B.A."/>
            <person name="Kere J."/>
            <person name="Armengol L."/>
            <person name="Pujana M.A."/>
            <person name="Estivill X."/>
            <person name="Wilson M.D."/>
            <person name="Koop B.F."/>
            <person name="Tosi S."/>
            <person name="Moore G.E."/>
            <person name="Boright A.P."/>
            <person name="Zlotorynski E."/>
            <person name="Kerem B."/>
            <person name="Kroisel P.M."/>
            <person name="Petek E."/>
            <person name="Oscier D.G."/>
            <person name="Mould S.J."/>
            <person name="Doehner H."/>
            <person name="Doehner K."/>
            <person name="Rommens J.M."/>
            <person name="Vincent J.B."/>
            <person name="Venter J.C."/>
            <person name="Li P.W."/>
            <person name="Mural R.J."/>
            <person name="Adams M.D."/>
            <person name="Tsui L.-C."/>
        </authorList>
    </citation>
    <scope>NUCLEOTIDE SEQUENCE [LARGE SCALE GENOMIC DNA]</scope>
</reference>
<reference key="4">
    <citation type="submission" date="2005-09" db="EMBL/GenBank/DDBJ databases">
        <authorList>
            <person name="Mural R.J."/>
            <person name="Istrail S."/>
            <person name="Sutton G.G."/>
            <person name="Florea L."/>
            <person name="Halpern A.L."/>
            <person name="Mobarry C.M."/>
            <person name="Lippert R."/>
            <person name="Walenz B."/>
            <person name="Shatkay H."/>
            <person name="Dew I."/>
            <person name="Miller J.R."/>
            <person name="Flanigan M.J."/>
            <person name="Edwards N.J."/>
            <person name="Bolanos R."/>
            <person name="Fasulo D."/>
            <person name="Halldorsson B.V."/>
            <person name="Hannenhalli S."/>
            <person name="Turner R."/>
            <person name="Yooseph S."/>
            <person name="Lu F."/>
            <person name="Nusskern D.R."/>
            <person name="Shue B.C."/>
            <person name="Zheng X.H."/>
            <person name="Zhong F."/>
            <person name="Delcher A.L."/>
            <person name="Huson D.H."/>
            <person name="Kravitz S.A."/>
            <person name="Mouchard L."/>
            <person name="Reinert K."/>
            <person name="Remington K.A."/>
            <person name="Clark A.G."/>
            <person name="Waterman M.S."/>
            <person name="Eichler E.E."/>
            <person name="Adams M.D."/>
            <person name="Hunkapiller M.W."/>
            <person name="Myers E.W."/>
            <person name="Venter J.C."/>
        </authorList>
    </citation>
    <scope>NUCLEOTIDE SEQUENCE [LARGE SCALE GENOMIC DNA]</scope>
</reference>
<reference key="5">
    <citation type="submission" date="2005-07" db="EMBL/GenBank/DDBJ databases">
        <authorList>
            <person name="Mural R.J."/>
            <person name="Istrail S."/>
            <person name="Sutton G.G."/>
            <person name="Florea L."/>
            <person name="Halpern A.L."/>
            <person name="Mobarry C.M."/>
            <person name="Lippert R."/>
            <person name="Walenz B."/>
            <person name="Shatkay H."/>
            <person name="Dew I."/>
            <person name="Miller J.R."/>
            <person name="Flanigan M.J."/>
            <person name="Edwards N.J."/>
            <person name="Bolanos R."/>
            <person name="Fasulo D."/>
            <person name="Halldorsson B.V."/>
            <person name="Hannenhalli S."/>
            <person name="Turner R."/>
            <person name="Yooseph S."/>
            <person name="Lu F."/>
            <person name="Nusskern D.R."/>
            <person name="Shue B.C."/>
            <person name="Zheng X.H."/>
            <person name="Zhong F."/>
            <person name="Delcher A.L."/>
            <person name="Huson D.H."/>
            <person name="Kravitz S.A."/>
            <person name="Mouchard L."/>
            <person name="Reinert K."/>
            <person name="Remington K.A."/>
            <person name="Clark A.G."/>
            <person name="Waterman M.S."/>
            <person name="Eichler E.E."/>
            <person name="Adams M.D."/>
            <person name="Hunkapiller M.W."/>
            <person name="Myers E.W."/>
            <person name="Venter J.C."/>
        </authorList>
    </citation>
    <scope>NUCLEOTIDE SEQUENCE [LARGE SCALE GENOMIC DNA]</scope>
</reference>
<reference key="6">
    <citation type="journal article" date="2004" name="Genome Res.">
        <title>The status, quality, and expansion of the NIH full-length cDNA project: the Mammalian Gene Collection (MGC).</title>
        <authorList>
            <consortium name="The MGC Project Team"/>
        </authorList>
    </citation>
    <scope>NUCLEOTIDE SEQUENCE [LARGE SCALE MRNA] OF 4-544 (ISOFORM 1)</scope>
    <scope>NUCLEOTIDE SEQUENCE [LARGE SCALE MRNA] OF 7-544 (ISOFORMS 2 AND 4)</scope>
    <source>
        <tissue>Lung</tissue>
        <tissue>Lymph</tissue>
    </source>
</reference>
<reference key="7">
    <citation type="journal article" date="2015" name="Mol. Cell. Proteomics">
        <title>System-wide analysis of SUMOylation dynamics in response to replication stress reveals novel small ubiquitin-like modified target proteins and acceptor lysines relevant for genome stability.</title>
        <authorList>
            <person name="Xiao Z."/>
            <person name="Chang J.G."/>
            <person name="Hendriks I.A."/>
            <person name="Sigurdsson J.O."/>
            <person name="Olsen J.V."/>
            <person name="Vertegaal A.C."/>
        </authorList>
    </citation>
    <scope>SUMOYLATION [LARGE SCALE ANALYSIS] AT LYS-128</scope>
    <scope>IDENTIFICATION BY MASS SPECTROMETRY [LARGE SCALE ANALYSIS]</scope>
</reference>
<reference key="8">
    <citation type="journal article" date="2017" name="Nat. Struct. Mol. Biol.">
        <title>Site-specific mapping of the human SUMO proteome reveals co-modification with phosphorylation.</title>
        <authorList>
            <person name="Hendriks I.A."/>
            <person name="Lyon D."/>
            <person name="Young C."/>
            <person name="Jensen L.J."/>
            <person name="Vertegaal A.C."/>
            <person name="Nielsen M.L."/>
        </authorList>
    </citation>
    <scope>SUMOYLATION [LARGE SCALE ANALYSIS] AT LYS-3; LYS-22; LYS-128; LYS-278 AND LYS-285</scope>
    <scope>IDENTIFICATION BY MASS SPECTROMETRY [LARGE SCALE ANALYSIS]</scope>
</reference>
<evidence type="ECO:0000250" key="1"/>
<evidence type="ECO:0000255" key="2">
    <source>
        <dbReference type="PROSITE-ProRule" id="PRU00042"/>
    </source>
</evidence>
<evidence type="ECO:0000255" key="3">
    <source>
        <dbReference type="PROSITE-ProRule" id="PRU00187"/>
    </source>
</evidence>
<evidence type="ECO:0000256" key="4">
    <source>
        <dbReference type="SAM" id="MobiDB-lite"/>
    </source>
</evidence>
<evidence type="ECO:0000303" key="5">
    <source>
    </source>
</evidence>
<evidence type="ECO:0000303" key="6">
    <source>
    </source>
</evidence>
<evidence type="ECO:0000303" key="7">
    <source ref="1"/>
</evidence>
<evidence type="ECO:0000305" key="8"/>
<evidence type="ECO:0007744" key="9">
    <source>
    </source>
</evidence>
<evidence type="ECO:0007744" key="10">
    <source>
    </source>
</evidence>
<accession>Q6NSZ9</accession>
<accession>A4D290</accession>
<accession>D6W5T5</accession>
<accession>Q14C82</accession>
<accession>Q14C99</accession>
<accession>Q5EBM9</accession>
<accession>Q6DJZ0</accession>
<accession>Q6N032</accession>
<accession>Q6ZML3</accession>
<feature type="chain" id="PRO_0000309332" description="Zinc finger and SCAN domain-containing protein 25">
    <location>
        <begin position="1"/>
        <end position="544"/>
    </location>
</feature>
<feature type="domain" description="SCAN box" evidence="3">
    <location>
        <begin position="42"/>
        <end position="124"/>
    </location>
</feature>
<feature type="zinc finger region" description="C2H2-type 1" evidence="2">
    <location>
        <begin position="348"/>
        <end position="370"/>
    </location>
</feature>
<feature type="zinc finger region" description="C2H2-type 2" evidence="2">
    <location>
        <begin position="375"/>
        <end position="397"/>
    </location>
</feature>
<feature type="zinc finger region" description="C2H2-type 3" evidence="2">
    <location>
        <begin position="403"/>
        <end position="425"/>
    </location>
</feature>
<feature type="zinc finger region" description="C2H2-type 4" evidence="2">
    <location>
        <begin position="431"/>
        <end position="453"/>
    </location>
</feature>
<feature type="zinc finger region" description="C2H2-type 5" evidence="2">
    <location>
        <begin position="459"/>
        <end position="480"/>
    </location>
</feature>
<feature type="zinc finger region" description="C2H2-type 6" evidence="2">
    <location>
        <begin position="486"/>
        <end position="508"/>
    </location>
</feature>
<feature type="zinc finger region" description="C2H2-type 7; degenerate" evidence="2">
    <location>
        <begin position="514"/>
        <end position="536"/>
    </location>
</feature>
<feature type="region of interest" description="Disordered" evidence="4">
    <location>
        <begin position="157"/>
        <end position="189"/>
    </location>
</feature>
<feature type="cross-link" description="Glycyl lysine isopeptide (Lys-Gly) (interchain with G-Cter in SUMO2)" evidence="10">
    <location>
        <position position="3"/>
    </location>
</feature>
<feature type="cross-link" description="Glycyl lysine isopeptide (Lys-Gly) (interchain with G-Cter in SUMO2)" evidence="10">
    <location>
        <position position="22"/>
    </location>
</feature>
<feature type="cross-link" description="Glycyl lysine isopeptide (Lys-Gly) (interchain with G-Cter in SUMO2)" evidence="9 10">
    <location>
        <position position="128"/>
    </location>
</feature>
<feature type="cross-link" description="Glycyl lysine isopeptide (Lys-Gly) (interchain with G-Cter in SUMO2)" evidence="10">
    <location>
        <position position="278"/>
    </location>
</feature>
<feature type="cross-link" description="Glycyl lysine isopeptide (Lys-Gly) (interchain with G-Cter in SUMO2)" evidence="10">
    <location>
        <position position="285"/>
    </location>
</feature>
<feature type="splice variant" id="VSP_029145" description="In isoform 3." evidence="7">
    <location>
        <begin position="1"/>
        <end position="216"/>
    </location>
</feature>
<feature type="splice variant" id="VSP_029146" description="In isoform 4." evidence="5 6">
    <original>VPCHRQGEQEETALCRGAWEPGIQLGPVEVKPEWGMPPGEGVQGPDPGTEEQLSQDPGDETRAFQEQALPVLQAGPGLPAVNPRDQEMAAGFFTAGSQGLGPFKDMALAFPEEEWRHVTPAQIDCFGEYVEPQDCRVSPGGGSKEKEAKPPQEDLKGALVALTSERFGEASLQGPGLGRVCEQEPGGPAGSAPGLPPPQHGAIPLPDEVKTHSSFWKPFQCPECGKGFSRSSNLVRHQRTHEEKSYGCVECGKGFTLREYLMKHQRTHLGKRPYVCSECWKTFSQRHHLEVHQRSHTGEKPYKCGDCWKSFSRRQHLQVHRRTHTGEKPYTCECGKSFSRNANLAVHRRAHTGEKPYGCQVCGKRFSKGERLVRHQRIHTGEKPYHCPACGRSFNQRSILNRHQKTQHRQEPLVQ</original>
    <variation>VGSMPQAGRAGGNSTLQRRLGARHPAGASGGQA</variation>
    <location>
        <begin position="130"/>
        <end position="544"/>
    </location>
</feature>
<feature type="splice variant" id="VSP_029147" description="In isoform 2." evidence="5">
    <location>
        <begin position="197"/>
        <end position="268"/>
    </location>
</feature>
<feature type="sequence variant" id="VAR_036931" description="In dbSNP:rs10239632.">
    <original>P</original>
    <variation>A</variation>
    <location>
        <position position="325"/>
    </location>
</feature>
<comment type="function">
    <text evidence="1">May be involved in transcriptional regulation.</text>
</comment>
<comment type="interaction">
    <interactant intactId="EBI-14650477">
        <id>Q6NSZ9-2</id>
    </interactant>
    <interactant intactId="EBI-3866279">
        <id>Q9BWT7</id>
        <label>CARD10</label>
    </interactant>
    <organismsDiffer>false</organismsDiffer>
    <experiments>3</experiments>
</comment>
<comment type="interaction">
    <interactant intactId="EBI-14650477">
        <id>Q6NSZ9-2</id>
    </interactant>
    <interactant intactId="EBI-347804">
        <id>P68400</id>
        <label>CSNK2A1</label>
    </interactant>
    <organismsDiffer>false</organismsDiffer>
    <experiments>3</experiments>
</comment>
<comment type="interaction">
    <interactant intactId="EBI-14650477">
        <id>Q6NSZ9-2</id>
    </interactant>
    <interactant intactId="EBI-739789">
        <id>Q92997</id>
        <label>DVL3</label>
    </interactant>
    <organismsDiffer>false</organismsDiffer>
    <experiments>3</experiments>
</comment>
<comment type="interaction">
    <interactant intactId="EBI-14650477">
        <id>Q6NSZ9-2</id>
    </interactant>
    <interactant intactId="EBI-745846">
        <id>P57086</id>
        <label>SCAND1</label>
    </interactant>
    <organismsDiffer>false</organismsDiffer>
    <experiments>3</experiments>
</comment>
<comment type="interaction">
    <interactant intactId="EBI-14650477">
        <id>Q6NSZ9-2</id>
    </interactant>
    <interactant intactId="EBI-10178224">
        <id>P10073</id>
        <label>ZSCAN22</label>
    </interactant>
    <organismsDiffer>false</organismsDiffer>
    <experiments>3</experiments>
</comment>
<comment type="subcellular location">
    <subcellularLocation>
        <location evidence="3">Nucleus</location>
    </subcellularLocation>
</comment>
<comment type="alternative products">
    <event type="alternative splicing"/>
    <isoform>
        <id>Q6NSZ9-1</id>
        <name>1</name>
        <sequence type="displayed"/>
    </isoform>
    <isoform>
        <id>Q6NSZ9-2</id>
        <name>2</name>
        <sequence type="described" ref="VSP_029147"/>
    </isoform>
    <isoform>
        <id>Q6NSZ9-3</id>
        <name>3</name>
        <sequence type="described" ref="VSP_029145"/>
    </isoform>
    <isoform>
        <id>Q6NSZ9-4</id>
        <name>4</name>
        <sequence type="described" ref="VSP_029146"/>
    </isoform>
</comment>
<comment type="similarity">
    <text evidence="8">Belongs to the krueppel C2H2-type zinc-finger protein family.</text>
</comment>
<comment type="sequence caution" evidence="8">
    <conflict type="erroneous initiation">
        <sequence resource="EMBL-CDS" id="AAI14574"/>
    </conflict>
    <text>Truncated N-terminus.</text>
</comment>
<comment type="sequence caution" evidence="8">
    <conflict type="erroneous translation">
        <sequence resource="EMBL-CDS" id="AAI14942"/>
    </conflict>
    <text>Wrong choice of frame.</text>
</comment>
<comment type="sequence caution" evidence="8">
    <conflict type="erroneous initiation">
        <sequence resource="EMBL-CDS" id="BAD18712"/>
    </conflict>
    <text>Extended N-terminus.</text>
</comment>
<comment type="sequence caution" evidence="8">
    <conflict type="erroneous gene model prediction">
        <sequence resource="EMBL-CDS" id="EAL23869"/>
    </conflict>
</comment>
<protein>
    <recommendedName>
        <fullName>Zinc finger and SCAN domain-containing protein 25</fullName>
    </recommendedName>
    <alternativeName>
        <fullName>Zinc finger protein 498</fullName>
    </alternativeName>
</protein>
<sequence>MLKEHPEMAEAPQQQLGIPVVKLEKELPWGRGREDPSPETFRLRFRQFRYQEAAGPQEALRELQELCRRWLRPELHTKEQILELLVLEQFLTILPREFYAWIREHGPESGKALAAMVEDLTERALEAKAVPCHRQGEQEETALCRGAWEPGIQLGPVEVKPEWGMPPGEGVQGPDPGTEEQLSQDPGDETRAFQEQALPVLQAGPGLPAVNPRDQEMAAGFFTAGSQGLGPFKDMALAFPEEEWRHVTPAQIDCFGEYVEPQDCRVSPGGGSKEKEAKPPQEDLKGALVALTSERFGEASLQGPGLGRVCEQEPGGPAGSAPGLPPPQHGAIPLPDEVKTHSSFWKPFQCPECGKGFSRSSNLVRHQRTHEEKSYGCVECGKGFTLREYLMKHQRTHLGKRPYVCSECWKTFSQRHHLEVHQRSHTGEKPYKCGDCWKSFSRRQHLQVHRRTHTGEKPYTCECGKSFSRNANLAVHRRAHTGEKPYGCQVCGKRFSKGERLVRHQRIHTGEKPYHCPACGRSFNQRSILNRHQKTQHRQEPLVQ</sequence>
<name>ZSC25_HUMAN</name>